<sequence>MSIITDVYAREVLDSRGNPTLEVEVYTESGAFGRGMVPSGASTGEHEAVELRDGDKSRYLGLGTQKAVDNVNNIIAEAIIGYDVRDQQAIDRAMITLDGTPNKGKLGANAILGVSIAVARAAADYLEVPLYTYLGGFNTKVLPTPMMNIINGGSHSDAPIAFQEFMIMPVGAPTFKEGLRWGAEVFHALKKILKERGLVTAVGDEGGFAPKFEGTEDGVETILKAIEAAGYEAGENGIMIGFDCASSEFYDKERKVYDYTKFEGEGAAVRTSAEQVDYLEELVNKYPIITIEDGMDENDWDGWKVLTERLGKRVQLVGDDFFVTNTEYLARGIKENAANSILIKVNQIGTLTETFEAIEMAKEAGYTAVVSHRSGETEDSTIADIAVATNAGQIKTGSLSRTDRIAKYNQLLRIEDQLGEVAQYKGIKSFYNLKK</sequence>
<evidence type="ECO:0000255" key="1">
    <source>
        <dbReference type="HAMAP-Rule" id="MF_00318"/>
    </source>
</evidence>
<organism>
    <name type="scientific">Streptococcus pyogenes serotype M12 (strain MGAS2096)</name>
    <dbReference type="NCBI Taxonomy" id="370553"/>
    <lineage>
        <taxon>Bacteria</taxon>
        <taxon>Bacillati</taxon>
        <taxon>Bacillota</taxon>
        <taxon>Bacilli</taxon>
        <taxon>Lactobacillales</taxon>
        <taxon>Streptococcaceae</taxon>
        <taxon>Streptococcus</taxon>
    </lineage>
</organism>
<name>ENO_STRPB</name>
<protein>
    <recommendedName>
        <fullName evidence="1">Enolase</fullName>
        <ecNumber evidence="1">4.2.1.11</ecNumber>
    </recommendedName>
    <alternativeName>
        <fullName evidence="1">2-phospho-D-glycerate hydro-lyase</fullName>
    </alternativeName>
    <alternativeName>
        <fullName evidence="1">2-phosphoglycerate dehydratase</fullName>
    </alternativeName>
</protein>
<dbReference type="EC" id="4.2.1.11" evidence="1"/>
<dbReference type="EMBL" id="CP000261">
    <property type="protein sequence ID" value="ABF35670.1"/>
    <property type="molecule type" value="Genomic_DNA"/>
</dbReference>
<dbReference type="SMR" id="Q1JCN8"/>
<dbReference type="KEGG" id="spj:MGAS2096_Spy0618"/>
<dbReference type="HOGENOM" id="CLU_031223_2_1_9"/>
<dbReference type="UniPathway" id="UPA00109">
    <property type="reaction ID" value="UER00187"/>
</dbReference>
<dbReference type="GO" id="GO:0009986">
    <property type="term" value="C:cell surface"/>
    <property type="evidence" value="ECO:0007669"/>
    <property type="project" value="UniProtKB-SubCell"/>
</dbReference>
<dbReference type="GO" id="GO:0005576">
    <property type="term" value="C:extracellular region"/>
    <property type="evidence" value="ECO:0007669"/>
    <property type="project" value="UniProtKB-SubCell"/>
</dbReference>
<dbReference type="GO" id="GO:0009274">
    <property type="term" value="C:peptidoglycan-based cell wall"/>
    <property type="evidence" value="ECO:0007669"/>
    <property type="project" value="UniProtKB-ARBA"/>
</dbReference>
<dbReference type="GO" id="GO:0000015">
    <property type="term" value="C:phosphopyruvate hydratase complex"/>
    <property type="evidence" value="ECO:0007669"/>
    <property type="project" value="InterPro"/>
</dbReference>
<dbReference type="GO" id="GO:0000287">
    <property type="term" value="F:magnesium ion binding"/>
    <property type="evidence" value="ECO:0007669"/>
    <property type="project" value="UniProtKB-UniRule"/>
</dbReference>
<dbReference type="GO" id="GO:0004634">
    <property type="term" value="F:phosphopyruvate hydratase activity"/>
    <property type="evidence" value="ECO:0007669"/>
    <property type="project" value="UniProtKB-UniRule"/>
</dbReference>
<dbReference type="GO" id="GO:0006096">
    <property type="term" value="P:glycolytic process"/>
    <property type="evidence" value="ECO:0007669"/>
    <property type="project" value="UniProtKB-UniRule"/>
</dbReference>
<dbReference type="CDD" id="cd03313">
    <property type="entry name" value="enolase"/>
    <property type="match status" value="1"/>
</dbReference>
<dbReference type="FunFam" id="3.20.20.120:FF:000001">
    <property type="entry name" value="Enolase"/>
    <property type="match status" value="1"/>
</dbReference>
<dbReference type="FunFam" id="3.30.390.10:FF:000001">
    <property type="entry name" value="Enolase"/>
    <property type="match status" value="1"/>
</dbReference>
<dbReference type="Gene3D" id="3.20.20.120">
    <property type="entry name" value="Enolase-like C-terminal domain"/>
    <property type="match status" value="1"/>
</dbReference>
<dbReference type="Gene3D" id="3.30.390.10">
    <property type="entry name" value="Enolase-like, N-terminal domain"/>
    <property type="match status" value="1"/>
</dbReference>
<dbReference type="HAMAP" id="MF_00318">
    <property type="entry name" value="Enolase"/>
    <property type="match status" value="1"/>
</dbReference>
<dbReference type="InterPro" id="IPR000941">
    <property type="entry name" value="Enolase"/>
</dbReference>
<dbReference type="InterPro" id="IPR036849">
    <property type="entry name" value="Enolase-like_C_sf"/>
</dbReference>
<dbReference type="InterPro" id="IPR029017">
    <property type="entry name" value="Enolase-like_N"/>
</dbReference>
<dbReference type="InterPro" id="IPR020810">
    <property type="entry name" value="Enolase_C"/>
</dbReference>
<dbReference type="InterPro" id="IPR020809">
    <property type="entry name" value="Enolase_CS"/>
</dbReference>
<dbReference type="InterPro" id="IPR020811">
    <property type="entry name" value="Enolase_N"/>
</dbReference>
<dbReference type="NCBIfam" id="TIGR01060">
    <property type="entry name" value="eno"/>
    <property type="match status" value="1"/>
</dbReference>
<dbReference type="PANTHER" id="PTHR11902">
    <property type="entry name" value="ENOLASE"/>
    <property type="match status" value="1"/>
</dbReference>
<dbReference type="PANTHER" id="PTHR11902:SF1">
    <property type="entry name" value="ENOLASE"/>
    <property type="match status" value="1"/>
</dbReference>
<dbReference type="Pfam" id="PF00113">
    <property type="entry name" value="Enolase_C"/>
    <property type="match status" value="1"/>
</dbReference>
<dbReference type="Pfam" id="PF03952">
    <property type="entry name" value="Enolase_N"/>
    <property type="match status" value="1"/>
</dbReference>
<dbReference type="PIRSF" id="PIRSF001400">
    <property type="entry name" value="Enolase"/>
    <property type="match status" value="1"/>
</dbReference>
<dbReference type="PRINTS" id="PR00148">
    <property type="entry name" value="ENOLASE"/>
</dbReference>
<dbReference type="SFLD" id="SFLDF00002">
    <property type="entry name" value="enolase"/>
    <property type="match status" value="1"/>
</dbReference>
<dbReference type="SFLD" id="SFLDG00178">
    <property type="entry name" value="enolase"/>
    <property type="match status" value="1"/>
</dbReference>
<dbReference type="SMART" id="SM01192">
    <property type="entry name" value="Enolase_C"/>
    <property type="match status" value="1"/>
</dbReference>
<dbReference type="SMART" id="SM01193">
    <property type="entry name" value="Enolase_N"/>
    <property type="match status" value="1"/>
</dbReference>
<dbReference type="SUPFAM" id="SSF51604">
    <property type="entry name" value="Enolase C-terminal domain-like"/>
    <property type="match status" value="1"/>
</dbReference>
<dbReference type="SUPFAM" id="SSF54826">
    <property type="entry name" value="Enolase N-terminal domain-like"/>
    <property type="match status" value="1"/>
</dbReference>
<dbReference type="PROSITE" id="PS00164">
    <property type="entry name" value="ENOLASE"/>
    <property type="match status" value="1"/>
</dbReference>
<keyword id="KW-0963">Cytoplasm</keyword>
<keyword id="KW-0324">Glycolysis</keyword>
<keyword id="KW-0456">Lyase</keyword>
<keyword id="KW-0460">Magnesium</keyword>
<keyword id="KW-0479">Metal-binding</keyword>
<keyword id="KW-0964">Secreted</keyword>
<reference key="1">
    <citation type="journal article" date="2006" name="Proc. Natl. Acad. Sci. U.S.A.">
        <title>Molecular genetic anatomy of inter- and intraserotype variation in the human bacterial pathogen group A Streptococcus.</title>
        <authorList>
            <person name="Beres S.B."/>
            <person name="Richter E.W."/>
            <person name="Nagiec M.J."/>
            <person name="Sumby P."/>
            <person name="Porcella S.F."/>
            <person name="DeLeo F.R."/>
            <person name="Musser J.M."/>
        </authorList>
    </citation>
    <scope>NUCLEOTIDE SEQUENCE [LARGE SCALE GENOMIC DNA]</scope>
    <source>
        <strain>MGAS2096</strain>
    </source>
</reference>
<proteinExistence type="inferred from homology"/>
<accession>Q1JCN8</accession>
<gene>
    <name evidence="1" type="primary">eno</name>
    <name type="ordered locus">MGAS2096_Spy0618</name>
</gene>
<feature type="chain" id="PRO_0000267116" description="Enolase">
    <location>
        <begin position="1"/>
        <end position="435"/>
    </location>
</feature>
<feature type="active site" description="Proton donor" evidence="1">
    <location>
        <position position="205"/>
    </location>
</feature>
<feature type="active site" description="Proton acceptor" evidence="1">
    <location>
        <position position="344"/>
    </location>
</feature>
<feature type="binding site" evidence="1">
    <location>
        <position position="163"/>
    </location>
    <ligand>
        <name>(2R)-2-phosphoglycerate</name>
        <dbReference type="ChEBI" id="CHEBI:58289"/>
    </ligand>
</feature>
<feature type="binding site" evidence="1">
    <location>
        <position position="243"/>
    </location>
    <ligand>
        <name>Mg(2+)</name>
        <dbReference type="ChEBI" id="CHEBI:18420"/>
    </ligand>
</feature>
<feature type="binding site" evidence="1">
    <location>
        <position position="292"/>
    </location>
    <ligand>
        <name>Mg(2+)</name>
        <dbReference type="ChEBI" id="CHEBI:18420"/>
    </ligand>
</feature>
<feature type="binding site" evidence="1">
    <location>
        <position position="319"/>
    </location>
    <ligand>
        <name>Mg(2+)</name>
        <dbReference type="ChEBI" id="CHEBI:18420"/>
    </ligand>
</feature>
<feature type="binding site" evidence="1">
    <location>
        <position position="344"/>
    </location>
    <ligand>
        <name>(2R)-2-phosphoglycerate</name>
        <dbReference type="ChEBI" id="CHEBI:58289"/>
    </ligand>
</feature>
<feature type="binding site" evidence="1">
    <location>
        <position position="373"/>
    </location>
    <ligand>
        <name>(2R)-2-phosphoglycerate</name>
        <dbReference type="ChEBI" id="CHEBI:58289"/>
    </ligand>
</feature>
<feature type="binding site" evidence="1">
    <location>
        <position position="374"/>
    </location>
    <ligand>
        <name>(2R)-2-phosphoglycerate</name>
        <dbReference type="ChEBI" id="CHEBI:58289"/>
    </ligand>
</feature>
<feature type="binding site" evidence="1">
    <location>
        <position position="395"/>
    </location>
    <ligand>
        <name>(2R)-2-phosphoglycerate</name>
        <dbReference type="ChEBI" id="CHEBI:58289"/>
    </ligand>
</feature>
<comment type="function">
    <text evidence="1">Catalyzes the reversible conversion of 2-phosphoglycerate (2-PG) into phosphoenolpyruvate (PEP). It is essential for the degradation of carbohydrates via glycolysis.</text>
</comment>
<comment type="catalytic activity">
    <reaction evidence="1">
        <text>(2R)-2-phosphoglycerate = phosphoenolpyruvate + H2O</text>
        <dbReference type="Rhea" id="RHEA:10164"/>
        <dbReference type="ChEBI" id="CHEBI:15377"/>
        <dbReference type="ChEBI" id="CHEBI:58289"/>
        <dbReference type="ChEBI" id="CHEBI:58702"/>
        <dbReference type="EC" id="4.2.1.11"/>
    </reaction>
</comment>
<comment type="cofactor">
    <cofactor evidence="1">
        <name>Mg(2+)</name>
        <dbReference type="ChEBI" id="CHEBI:18420"/>
    </cofactor>
    <text evidence="1">Binds a second Mg(2+) ion via substrate during catalysis.</text>
</comment>
<comment type="pathway">
    <text evidence="1">Carbohydrate degradation; glycolysis; pyruvate from D-glyceraldehyde 3-phosphate: step 4/5.</text>
</comment>
<comment type="subcellular location">
    <subcellularLocation>
        <location evidence="1">Cytoplasm</location>
    </subcellularLocation>
    <subcellularLocation>
        <location evidence="1">Secreted</location>
    </subcellularLocation>
    <subcellularLocation>
        <location evidence="1">Cell surface</location>
    </subcellularLocation>
    <text evidence="1">Fractions of enolase are present in both the cytoplasm and on the cell surface.</text>
</comment>
<comment type="similarity">
    <text evidence="1">Belongs to the enolase family.</text>
</comment>